<reference key="1">
    <citation type="submission" date="2007-03" db="EMBL/GenBank/DDBJ databases">
        <title>Complete sequence of Desulfotomaculum reducens MI-1.</title>
        <authorList>
            <consortium name="US DOE Joint Genome Institute"/>
            <person name="Copeland A."/>
            <person name="Lucas S."/>
            <person name="Lapidus A."/>
            <person name="Barry K."/>
            <person name="Detter J.C."/>
            <person name="Glavina del Rio T."/>
            <person name="Hammon N."/>
            <person name="Israni S."/>
            <person name="Dalin E."/>
            <person name="Tice H."/>
            <person name="Pitluck S."/>
            <person name="Sims D."/>
            <person name="Brettin T."/>
            <person name="Bruce D."/>
            <person name="Han C."/>
            <person name="Tapia R."/>
            <person name="Schmutz J."/>
            <person name="Larimer F."/>
            <person name="Land M."/>
            <person name="Hauser L."/>
            <person name="Kyrpides N."/>
            <person name="Kim E."/>
            <person name="Tebo B.M."/>
            <person name="Richardson P."/>
        </authorList>
    </citation>
    <scope>NUCLEOTIDE SEQUENCE [LARGE SCALE GENOMIC DNA]</scope>
    <source>
        <strain>ATCC BAA-1160 / DSM 100696 / MI-1</strain>
    </source>
</reference>
<name>RNH_DESRM</name>
<dbReference type="EC" id="3.1.26.4" evidence="1"/>
<dbReference type="EMBL" id="CP000612">
    <property type="protein sequence ID" value="ABO50966.1"/>
    <property type="molecule type" value="Genomic_DNA"/>
</dbReference>
<dbReference type="RefSeq" id="WP_011878764.1">
    <property type="nucleotide sequence ID" value="NC_009253.1"/>
</dbReference>
<dbReference type="SMR" id="A4J7B3"/>
<dbReference type="STRING" id="349161.Dred_2456"/>
<dbReference type="KEGG" id="drm:Dred_2456"/>
<dbReference type="eggNOG" id="COG0328">
    <property type="taxonomic scope" value="Bacteria"/>
</dbReference>
<dbReference type="HOGENOM" id="CLU_030894_6_2_9"/>
<dbReference type="OrthoDB" id="7845843at2"/>
<dbReference type="Proteomes" id="UP000001556">
    <property type="component" value="Chromosome"/>
</dbReference>
<dbReference type="GO" id="GO:0005737">
    <property type="term" value="C:cytoplasm"/>
    <property type="evidence" value="ECO:0007669"/>
    <property type="project" value="UniProtKB-SubCell"/>
</dbReference>
<dbReference type="GO" id="GO:0000287">
    <property type="term" value="F:magnesium ion binding"/>
    <property type="evidence" value="ECO:0007669"/>
    <property type="project" value="UniProtKB-UniRule"/>
</dbReference>
<dbReference type="GO" id="GO:0003676">
    <property type="term" value="F:nucleic acid binding"/>
    <property type="evidence" value="ECO:0007669"/>
    <property type="project" value="InterPro"/>
</dbReference>
<dbReference type="GO" id="GO:0004523">
    <property type="term" value="F:RNA-DNA hybrid ribonuclease activity"/>
    <property type="evidence" value="ECO:0007669"/>
    <property type="project" value="UniProtKB-UniRule"/>
</dbReference>
<dbReference type="GO" id="GO:0043137">
    <property type="term" value="P:DNA replication, removal of RNA primer"/>
    <property type="evidence" value="ECO:0007669"/>
    <property type="project" value="TreeGrafter"/>
</dbReference>
<dbReference type="CDD" id="cd09278">
    <property type="entry name" value="RNase_HI_prokaryote_like"/>
    <property type="match status" value="1"/>
</dbReference>
<dbReference type="FunFam" id="3.30.420.10:FF:000089">
    <property type="entry name" value="Ribonuclease H"/>
    <property type="match status" value="1"/>
</dbReference>
<dbReference type="Gene3D" id="3.30.420.10">
    <property type="entry name" value="Ribonuclease H-like superfamily/Ribonuclease H"/>
    <property type="match status" value="1"/>
</dbReference>
<dbReference type="HAMAP" id="MF_00042">
    <property type="entry name" value="RNase_H"/>
    <property type="match status" value="1"/>
</dbReference>
<dbReference type="InterPro" id="IPR050092">
    <property type="entry name" value="RNase_H"/>
</dbReference>
<dbReference type="InterPro" id="IPR012337">
    <property type="entry name" value="RNaseH-like_sf"/>
</dbReference>
<dbReference type="InterPro" id="IPR002156">
    <property type="entry name" value="RNaseH_domain"/>
</dbReference>
<dbReference type="InterPro" id="IPR036397">
    <property type="entry name" value="RNaseH_sf"/>
</dbReference>
<dbReference type="InterPro" id="IPR022892">
    <property type="entry name" value="RNaseHI"/>
</dbReference>
<dbReference type="NCBIfam" id="NF001236">
    <property type="entry name" value="PRK00203.1"/>
    <property type="match status" value="1"/>
</dbReference>
<dbReference type="PANTHER" id="PTHR10642">
    <property type="entry name" value="RIBONUCLEASE H1"/>
    <property type="match status" value="1"/>
</dbReference>
<dbReference type="PANTHER" id="PTHR10642:SF26">
    <property type="entry name" value="RIBONUCLEASE H1"/>
    <property type="match status" value="1"/>
</dbReference>
<dbReference type="Pfam" id="PF00075">
    <property type="entry name" value="RNase_H"/>
    <property type="match status" value="1"/>
</dbReference>
<dbReference type="SUPFAM" id="SSF53098">
    <property type="entry name" value="Ribonuclease H-like"/>
    <property type="match status" value="1"/>
</dbReference>
<dbReference type="PROSITE" id="PS50879">
    <property type="entry name" value="RNASE_H_1"/>
    <property type="match status" value="1"/>
</dbReference>
<protein>
    <recommendedName>
        <fullName evidence="1">Ribonuclease H</fullName>
        <shortName evidence="1">RNase H</shortName>
        <ecNumber evidence="1">3.1.26.4</ecNumber>
    </recommendedName>
</protein>
<proteinExistence type="inferred from homology"/>
<evidence type="ECO:0000255" key="1">
    <source>
        <dbReference type="HAMAP-Rule" id="MF_00042"/>
    </source>
</evidence>
<evidence type="ECO:0000255" key="2">
    <source>
        <dbReference type="PROSITE-ProRule" id="PRU00408"/>
    </source>
</evidence>
<feature type="chain" id="PRO_0000332588" description="Ribonuclease H">
    <location>
        <begin position="1"/>
        <end position="159"/>
    </location>
</feature>
<feature type="domain" description="RNase H type-1" evidence="2">
    <location>
        <begin position="8"/>
        <end position="150"/>
    </location>
</feature>
<feature type="binding site" evidence="1">
    <location>
        <position position="17"/>
    </location>
    <ligand>
        <name>Mg(2+)</name>
        <dbReference type="ChEBI" id="CHEBI:18420"/>
        <label>1</label>
    </ligand>
</feature>
<feature type="binding site" evidence="1">
    <location>
        <position position="17"/>
    </location>
    <ligand>
        <name>Mg(2+)</name>
        <dbReference type="ChEBI" id="CHEBI:18420"/>
        <label>2</label>
    </ligand>
</feature>
<feature type="binding site" evidence="1">
    <location>
        <position position="55"/>
    </location>
    <ligand>
        <name>Mg(2+)</name>
        <dbReference type="ChEBI" id="CHEBI:18420"/>
        <label>1</label>
    </ligand>
</feature>
<feature type="binding site" evidence="1">
    <location>
        <position position="77"/>
    </location>
    <ligand>
        <name>Mg(2+)</name>
        <dbReference type="ChEBI" id="CHEBI:18420"/>
        <label>1</label>
    </ligand>
</feature>
<feature type="binding site" evidence="1">
    <location>
        <position position="142"/>
    </location>
    <ligand>
        <name>Mg(2+)</name>
        <dbReference type="ChEBI" id="CHEBI:18420"/>
        <label>2</label>
    </ligand>
</feature>
<keyword id="KW-0963">Cytoplasm</keyword>
<keyword id="KW-0255">Endonuclease</keyword>
<keyword id="KW-0378">Hydrolase</keyword>
<keyword id="KW-0460">Magnesium</keyword>
<keyword id="KW-0479">Metal-binding</keyword>
<keyword id="KW-0540">Nuclease</keyword>
<keyword id="KW-1185">Reference proteome</keyword>
<gene>
    <name evidence="1" type="primary">rnhA</name>
    <name type="ordered locus">Dred_2456</name>
</gene>
<organism>
    <name type="scientific">Desulforamulus reducens (strain ATCC BAA-1160 / DSM 100696 / MI-1)</name>
    <name type="common">Desulfotomaculum reducens</name>
    <dbReference type="NCBI Taxonomy" id="349161"/>
    <lineage>
        <taxon>Bacteria</taxon>
        <taxon>Bacillati</taxon>
        <taxon>Bacillota</taxon>
        <taxon>Clostridia</taxon>
        <taxon>Eubacteriales</taxon>
        <taxon>Peptococcaceae</taxon>
        <taxon>Desulforamulus</taxon>
    </lineage>
</organism>
<sequence>MNTNQNTNLKEITMYTDGACSGNPGPGGYGVVMLYKGHRKELSAGFRDTTNNRMELLATIVGLETLKEKCNVNLYTDSQYVVNAIEKGWAKKWRANGWMRNKKEPALNPDLWERLLKLCEFHNVKFNWVKGHAGHPENERCDQLAVAAAKQPNLPLDVR</sequence>
<accession>A4J7B3</accession>
<comment type="function">
    <text evidence="1">Endonuclease that specifically degrades the RNA of RNA-DNA hybrids.</text>
</comment>
<comment type="catalytic activity">
    <reaction evidence="1">
        <text>Endonucleolytic cleavage to 5'-phosphomonoester.</text>
        <dbReference type="EC" id="3.1.26.4"/>
    </reaction>
</comment>
<comment type="cofactor">
    <cofactor evidence="1">
        <name>Mg(2+)</name>
        <dbReference type="ChEBI" id="CHEBI:18420"/>
    </cofactor>
    <text evidence="1">Binds 1 Mg(2+) ion per subunit. May bind a second metal ion at a regulatory site, or after substrate binding.</text>
</comment>
<comment type="subunit">
    <text evidence="1">Monomer.</text>
</comment>
<comment type="subcellular location">
    <subcellularLocation>
        <location evidence="1">Cytoplasm</location>
    </subcellularLocation>
</comment>
<comment type="similarity">
    <text evidence="1">Belongs to the RNase H family.</text>
</comment>